<evidence type="ECO:0000255" key="1">
    <source>
        <dbReference type="HAMAP-Rule" id="MF_01595"/>
    </source>
</evidence>
<gene>
    <name evidence="1" type="primary">pnp</name>
    <name type="ordered locus">TM_1345</name>
</gene>
<feature type="chain" id="PRO_0000329913" description="Polyribonucleotide nucleotidyltransferase">
    <location>
        <begin position="1"/>
        <end position="708"/>
    </location>
</feature>
<feature type="domain" description="KH" evidence="1">
    <location>
        <begin position="555"/>
        <end position="615"/>
    </location>
</feature>
<feature type="domain" description="S1 motif" evidence="1">
    <location>
        <begin position="625"/>
        <end position="692"/>
    </location>
</feature>
<feature type="binding site" evidence="1">
    <location>
        <position position="488"/>
    </location>
    <ligand>
        <name>Mg(2+)</name>
        <dbReference type="ChEBI" id="CHEBI:18420"/>
    </ligand>
</feature>
<feature type="binding site" evidence="1">
    <location>
        <position position="494"/>
    </location>
    <ligand>
        <name>Mg(2+)</name>
        <dbReference type="ChEBI" id="CHEBI:18420"/>
    </ligand>
</feature>
<reference key="1">
    <citation type="journal article" date="1999" name="Nature">
        <title>Evidence for lateral gene transfer between Archaea and Bacteria from genome sequence of Thermotoga maritima.</title>
        <authorList>
            <person name="Nelson K.E."/>
            <person name="Clayton R.A."/>
            <person name="Gill S.R."/>
            <person name="Gwinn M.L."/>
            <person name="Dodson R.J."/>
            <person name="Haft D.H."/>
            <person name="Hickey E.K."/>
            <person name="Peterson J.D."/>
            <person name="Nelson W.C."/>
            <person name="Ketchum K.A."/>
            <person name="McDonald L.A."/>
            <person name="Utterback T.R."/>
            <person name="Malek J.A."/>
            <person name="Linher K.D."/>
            <person name="Garrett M.M."/>
            <person name="Stewart A.M."/>
            <person name="Cotton M.D."/>
            <person name="Pratt M.S."/>
            <person name="Phillips C.A."/>
            <person name="Richardson D.L."/>
            <person name="Heidelberg J.F."/>
            <person name="Sutton G.G."/>
            <person name="Fleischmann R.D."/>
            <person name="Eisen J.A."/>
            <person name="White O."/>
            <person name="Salzberg S.L."/>
            <person name="Smith H.O."/>
            <person name="Venter J.C."/>
            <person name="Fraser C.M."/>
        </authorList>
    </citation>
    <scope>NUCLEOTIDE SEQUENCE [LARGE SCALE GENOMIC DNA]</scope>
    <source>
        <strain>ATCC 43589 / DSM 3109 / JCM 10099 / NBRC 100826 / MSB8</strain>
    </source>
</reference>
<organism>
    <name type="scientific">Thermotoga maritima (strain ATCC 43589 / DSM 3109 / JCM 10099 / NBRC 100826 / MSB8)</name>
    <dbReference type="NCBI Taxonomy" id="243274"/>
    <lineage>
        <taxon>Bacteria</taxon>
        <taxon>Thermotogati</taxon>
        <taxon>Thermotogota</taxon>
        <taxon>Thermotogae</taxon>
        <taxon>Thermotogales</taxon>
        <taxon>Thermotogaceae</taxon>
        <taxon>Thermotoga</taxon>
    </lineage>
</organism>
<proteinExistence type="inferred from homology"/>
<name>PNP_THEMA</name>
<keyword id="KW-0963">Cytoplasm</keyword>
<keyword id="KW-0460">Magnesium</keyword>
<keyword id="KW-0479">Metal-binding</keyword>
<keyword id="KW-0548">Nucleotidyltransferase</keyword>
<keyword id="KW-1185">Reference proteome</keyword>
<keyword id="KW-0694">RNA-binding</keyword>
<keyword id="KW-0808">Transferase</keyword>
<dbReference type="EC" id="2.7.7.8" evidence="1"/>
<dbReference type="EMBL" id="AE000512">
    <property type="protein sequence ID" value="AAD36416.1"/>
    <property type="molecule type" value="Genomic_DNA"/>
</dbReference>
<dbReference type="PIR" id="A72264">
    <property type="entry name" value="A72264"/>
</dbReference>
<dbReference type="RefSeq" id="NP_229146.1">
    <property type="nucleotide sequence ID" value="NC_000853.1"/>
</dbReference>
<dbReference type="RefSeq" id="WP_004081541.1">
    <property type="nucleotide sequence ID" value="NZ_CP011107.1"/>
</dbReference>
<dbReference type="SMR" id="Q9X166"/>
<dbReference type="FunCoup" id="Q9X166">
    <property type="interactions" value="409"/>
</dbReference>
<dbReference type="STRING" id="243274.TM_1345"/>
<dbReference type="PaxDb" id="243274-THEMA_07615"/>
<dbReference type="EnsemblBacteria" id="AAD36416">
    <property type="protein sequence ID" value="AAD36416"/>
    <property type="gene ID" value="TM_1345"/>
</dbReference>
<dbReference type="KEGG" id="tma:TM1345"/>
<dbReference type="KEGG" id="tmi:THEMA_07615"/>
<dbReference type="KEGG" id="tmm:Tmari_1352"/>
<dbReference type="KEGG" id="tmw:THMA_1370"/>
<dbReference type="eggNOG" id="COG1185">
    <property type="taxonomic scope" value="Bacteria"/>
</dbReference>
<dbReference type="InParanoid" id="Q9X166"/>
<dbReference type="OrthoDB" id="9804305at2"/>
<dbReference type="Proteomes" id="UP000008183">
    <property type="component" value="Chromosome"/>
</dbReference>
<dbReference type="GO" id="GO:0005829">
    <property type="term" value="C:cytosol"/>
    <property type="evidence" value="ECO:0000318"/>
    <property type="project" value="GO_Central"/>
</dbReference>
<dbReference type="GO" id="GO:0000175">
    <property type="term" value="F:3'-5'-RNA exonuclease activity"/>
    <property type="evidence" value="ECO:0000318"/>
    <property type="project" value="GO_Central"/>
</dbReference>
<dbReference type="GO" id="GO:0000287">
    <property type="term" value="F:magnesium ion binding"/>
    <property type="evidence" value="ECO:0007669"/>
    <property type="project" value="UniProtKB-UniRule"/>
</dbReference>
<dbReference type="GO" id="GO:0004654">
    <property type="term" value="F:polyribonucleotide nucleotidyltransferase activity"/>
    <property type="evidence" value="ECO:0000318"/>
    <property type="project" value="GO_Central"/>
</dbReference>
<dbReference type="GO" id="GO:0003723">
    <property type="term" value="F:RNA binding"/>
    <property type="evidence" value="ECO:0007669"/>
    <property type="project" value="UniProtKB-UniRule"/>
</dbReference>
<dbReference type="GO" id="GO:0006402">
    <property type="term" value="P:mRNA catabolic process"/>
    <property type="evidence" value="ECO:0007669"/>
    <property type="project" value="UniProtKB-UniRule"/>
</dbReference>
<dbReference type="GO" id="GO:0006401">
    <property type="term" value="P:RNA catabolic process"/>
    <property type="evidence" value="ECO:0000318"/>
    <property type="project" value="GO_Central"/>
</dbReference>
<dbReference type="GO" id="GO:0006396">
    <property type="term" value="P:RNA processing"/>
    <property type="evidence" value="ECO:0007669"/>
    <property type="project" value="InterPro"/>
</dbReference>
<dbReference type="CDD" id="cd02393">
    <property type="entry name" value="KH-I_PNPase"/>
    <property type="match status" value="1"/>
</dbReference>
<dbReference type="CDD" id="cd11363">
    <property type="entry name" value="RNase_PH_PNPase_1"/>
    <property type="match status" value="1"/>
</dbReference>
<dbReference type="CDD" id="cd11364">
    <property type="entry name" value="RNase_PH_PNPase_2"/>
    <property type="match status" value="1"/>
</dbReference>
<dbReference type="FunFam" id="3.30.1370.10:FF:000001">
    <property type="entry name" value="Polyribonucleotide nucleotidyltransferase"/>
    <property type="match status" value="1"/>
</dbReference>
<dbReference type="FunFam" id="3.30.230.70:FF:000001">
    <property type="entry name" value="Polyribonucleotide nucleotidyltransferase"/>
    <property type="match status" value="1"/>
</dbReference>
<dbReference type="FunFam" id="3.30.230.70:FF:000002">
    <property type="entry name" value="Polyribonucleotide nucleotidyltransferase"/>
    <property type="match status" value="1"/>
</dbReference>
<dbReference type="Gene3D" id="3.30.230.70">
    <property type="entry name" value="GHMP Kinase, N-terminal domain"/>
    <property type="match status" value="2"/>
</dbReference>
<dbReference type="Gene3D" id="3.30.1370.10">
    <property type="entry name" value="K Homology domain, type 1"/>
    <property type="match status" value="1"/>
</dbReference>
<dbReference type="Gene3D" id="2.40.50.140">
    <property type="entry name" value="Nucleic acid-binding proteins"/>
    <property type="match status" value="1"/>
</dbReference>
<dbReference type="HAMAP" id="MF_01595">
    <property type="entry name" value="PNPase"/>
    <property type="match status" value="1"/>
</dbReference>
<dbReference type="InterPro" id="IPR001247">
    <property type="entry name" value="ExoRNase_PH_dom1"/>
</dbReference>
<dbReference type="InterPro" id="IPR015847">
    <property type="entry name" value="ExoRNase_PH_dom2"/>
</dbReference>
<dbReference type="InterPro" id="IPR036345">
    <property type="entry name" value="ExoRNase_PH_dom2_sf"/>
</dbReference>
<dbReference type="InterPro" id="IPR004087">
    <property type="entry name" value="KH_dom"/>
</dbReference>
<dbReference type="InterPro" id="IPR004088">
    <property type="entry name" value="KH_dom_type_1"/>
</dbReference>
<dbReference type="InterPro" id="IPR036612">
    <property type="entry name" value="KH_dom_type_1_sf"/>
</dbReference>
<dbReference type="InterPro" id="IPR012340">
    <property type="entry name" value="NA-bd_OB-fold"/>
</dbReference>
<dbReference type="InterPro" id="IPR012162">
    <property type="entry name" value="PNPase"/>
</dbReference>
<dbReference type="InterPro" id="IPR027408">
    <property type="entry name" value="PNPase/RNase_PH_dom_sf"/>
</dbReference>
<dbReference type="InterPro" id="IPR015848">
    <property type="entry name" value="PNPase_PH_RNA-bd_bac/org-type"/>
</dbReference>
<dbReference type="InterPro" id="IPR020568">
    <property type="entry name" value="Ribosomal_Su5_D2-typ_SF"/>
</dbReference>
<dbReference type="InterPro" id="IPR003029">
    <property type="entry name" value="S1_domain"/>
</dbReference>
<dbReference type="NCBIfam" id="TIGR03591">
    <property type="entry name" value="polynuc_phos"/>
    <property type="match status" value="1"/>
</dbReference>
<dbReference type="NCBIfam" id="NF008805">
    <property type="entry name" value="PRK11824.1"/>
    <property type="match status" value="1"/>
</dbReference>
<dbReference type="PANTHER" id="PTHR11252">
    <property type="entry name" value="POLYRIBONUCLEOTIDE NUCLEOTIDYLTRANSFERASE"/>
    <property type="match status" value="1"/>
</dbReference>
<dbReference type="PANTHER" id="PTHR11252:SF0">
    <property type="entry name" value="POLYRIBONUCLEOTIDE NUCLEOTIDYLTRANSFERASE 1, MITOCHONDRIAL"/>
    <property type="match status" value="1"/>
</dbReference>
<dbReference type="Pfam" id="PF00013">
    <property type="entry name" value="KH_1"/>
    <property type="match status" value="1"/>
</dbReference>
<dbReference type="Pfam" id="PF03726">
    <property type="entry name" value="PNPase"/>
    <property type="match status" value="1"/>
</dbReference>
<dbReference type="Pfam" id="PF01138">
    <property type="entry name" value="RNase_PH"/>
    <property type="match status" value="2"/>
</dbReference>
<dbReference type="Pfam" id="PF03725">
    <property type="entry name" value="RNase_PH_C"/>
    <property type="match status" value="2"/>
</dbReference>
<dbReference type="Pfam" id="PF00575">
    <property type="entry name" value="S1"/>
    <property type="match status" value="1"/>
</dbReference>
<dbReference type="PIRSF" id="PIRSF005499">
    <property type="entry name" value="PNPase"/>
    <property type="match status" value="1"/>
</dbReference>
<dbReference type="SMART" id="SM00322">
    <property type="entry name" value="KH"/>
    <property type="match status" value="1"/>
</dbReference>
<dbReference type="SMART" id="SM00316">
    <property type="entry name" value="S1"/>
    <property type="match status" value="1"/>
</dbReference>
<dbReference type="SUPFAM" id="SSF54791">
    <property type="entry name" value="Eukaryotic type KH-domain (KH-domain type I)"/>
    <property type="match status" value="1"/>
</dbReference>
<dbReference type="SUPFAM" id="SSF50249">
    <property type="entry name" value="Nucleic acid-binding proteins"/>
    <property type="match status" value="1"/>
</dbReference>
<dbReference type="SUPFAM" id="SSF55666">
    <property type="entry name" value="Ribonuclease PH domain 2-like"/>
    <property type="match status" value="2"/>
</dbReference>
<dbReference type="SUPFAM" id="SSF54211">
    <property type="entry name" value="Ribosomal protein S5 domain 2-like"/>
    <property type="match status" value="2"/>
</dbReference>
<dbReference type="PROSITE" id="PS50084">
    <property type="entry name" value="KH_TYPE_1"/>
    <property type="match status" value="1"/>
</dbReference>
<dbReference type="PROSITE" id="PS50126">
    <property type="entry name" value="S1"/>
    <property type="match status" value="1"/>
</dbReference>
<protein>
    <recommendedName>
        <fullName evidence="1">Polyribonucleotide nucleotidyltransferase</fullName>
        <ecNumber evidence="1">2.7.7.8</ecNumber>
    </recommendedName>
    <alternativeName>
        <fullName evidence="1">Polynucleotide phosphorylase</fullName>
        <shortName evidence="1">PNPase</shortName>
    </alternativeName>
</protein>
<accession>Q9X166</accession>
<comment type="function">
    <text evidence="1">Involved in mRNA degradation. Catalyzes the phosphorolysis of single-stranded polyribonucleotides processively in the 3'- to 5'-direction.</text>
</comment>
<comment type="catalytic activity">
    <reaction evidence="1">
        <text>RNA(n+1) + phosphate = RNA(n) + a ribonucleoside 5'-diphosphate</text>
        <dbReference type="Rhea" id="RHEA:22096"/>
        <dbReference type="Rhea" id="RHEA-COMP:14527"/>
        <dbReference type="Rhea" id="RHEA-COMP:17342"/>
        <dbReference type="ChEBI" id="CHEBI:43474"/>
        <dbReference type="ChEBI" id="CHEBI:57930"/>
        <dbReference type="ChEBI" id="CHEBI:140395"/>
        <dbReference type="EC" id="2.7.7.8"/>
    </reaction>
</comment>
<comment type="cofactor">
    <cofactor evidence="1">
        <name>Mg(2+)</name>
        <dbReference type="ChEBI" id="CHEBI:18420"/>
    </cofactor>
</comment>
<comment type="subcellular location">
    <subcellularLocation>
        <location evidence="1">Cytoplasm</location>
    </subcellularLocation>
</comment>
<comment type="similarity">
    <text evidence="1">Belongs to the polyribonucleotide nucleotidyltransferase family.</text>
</comment>
<sequence length="708" mass="78621">MKEWRRNILGRELVVQYGKVAKQSSGSALVRFGDTVVLATANISDKAVEGIDFVPLTVEFQERFYAAGKIPGGFIKREGKPSESAILSARLIDRPIRPLFPKKLRNEVQVIVTVLSVDPNVPPDVVGIFAASLALNVSKIPFEGIVAGIRVGYRDGQFIALPSEEDIEKGLMDITVAGTKDAVTMVEGEAKEVTEEDMVKALRFAHSVIKELVDFQEEILSEFNVEKIPVVEPTPPEGLVEAFKDLLNKEELERRILVKVKKEREVALKEYEEQLLNQIAEKLSVTDLEGIKPFVSELYEDAVKKTMRRLIVEKGIRADGRKPTEIRPISCEVGLFPRTHGSALFTRGETQSLGIVTLGAPMDVQIIDTLLEEGVKRFMLHYNFPPFCTGEVKPLRGPSRREIGHGHLAERALKNMLPPEEEFPYTIRVVSEILESNGSSSMATVCSGSLALMDAGVPIKKHVAGIAMGLILEEDAEIILTDIIGMEDHYGDMDFKVAGTRDGITAFQMDCKVSGVSDELLMKALMQAREARMYILDRMYETISAPRPHLSKYAPIIKVTKVDPEKVADVIGPGGRVIKKIIKDFDVKVEIDDETGLVKVVGSSEENVDKAIELIREIAKEIEVGEVLEGKVTRIEPYGLFIEVRPGKIGLLHQSKVGEDMRQFLKKVKVGDTIKVQVINIDDLGRLQFKRVTEGENTQHGKTHSKRN</sequence>